<proteinExistence type="evidence at protein level"/>
<evidence type="ECO:0000250" key="1">
    <source>
        <dbReference type="UniProtKB" id="Q8CF82"/>
    </source>
</evidence>
<evidence type="ECO:0000255" key="2"/>
<evidence type="ECO:0000255" key="3">
    <source>
        <dbReference type="PROSITE-ProRule" id="PRU00434"/>
    </source>
</evidence>
<evidence type="ECO:0000269" key="4">
    <source>
    </source>
</evidence>
<evidence type="ECO:0000269" key="5">
    <source>
    </source>
</evidence>
<evidence type="ECO:0000269" key="6">
    <source>
    </source>
</evidence>
<evidence type="ECO:0000269" key="7">
    <source>
    </source>
</evidence>
<evidence type="ECO:0000269" key="8">
    <source>
    </source>
</evidence>
<evidence type="ECO:0000269" key="9">
    <source>
    </source>
</evidence>
<evidence type="ECO:0000269" key="10">
    <source>
    </source>
</evidence>
<evidence type="ECO:0000305" key="11"/>
<evidence type="ECO:0000305" key="12">
    <source>
    </source>
</evidence>
<evidence type="ECO:0000305" key="13">
    <source>
    </source>
</evidence>
<evidence type="ECO:0000312" key="14">
    <source>
        <dbReference type="MGI" id="MGI:2386607"/>
    </source>
</evidence>
<keyword id="KW-0067">ATP-binding</keyword>
<keyword id="KW-1003">Cell membrane</keyword>
<keyword id="KW-0967">Endosome</keyword>
<keyword id="KW-0325">Glycoprotein</keyword>
<keyword id="KW-0333">Golgi apparatus</keyword>
<keyword id="KW-0445">Lipid transport</keyword>
<keyword id="KW-0458">Lysosome</keyword>
<keyword id="KW-0472">Membrane</keyword>
<keyword id="KW-0547">Nucleotide-binding</keyword>
<keyword id="KW-1185">Reference proteome</keyword>
<keyword id="KW-0677">Repeat</keyword>
<keyword id="KW-1278">Translocase</keyword>
<keyword id="KW-0812">Transmembrane</keyword>
<keyword id="KW-1133">Transmembrane helix</keyword>
<keyword id="KW-0813">Transport</keyword>
<organism>
    <name type="scientific">Mus musculus</name>
    <name type="common">Mouse</name>
    <dbReference type="NCBI Taxonomy" id="10090"/>
    <lineage>
        <taxon>Eukaryota</taxon>
        <taxon>Metazoa</taxon>
        <taxon>Chordata</taxon>
        <taxon>Craniata</taxon>
        <taxon>Vertebrata</taxon>
        <taxon>Euteleostomi</taxon>
        <taxon>Mammalia</taxon>
        <taxon>Eutheria</taxon>
        <taxon>Euarchontoglires</taxon>
        <taxon>Glires</taxon>
        <taxon>Rodentia</taxon>
        <taxon>Myomorpha</taxon>
        <taxon>Muroidea</taxon>
        <taxon>Muridae</taxon>
        <taxon>Murinae</taxon>
        <taxon>Mus</taxon>
        <taxon>Mus</taxon>
    </lineage>
</organism>
<accession>Q8K448</accession>
<accession>Q3TE17</accession>
<accession>Q3UUB4</accession>
<accession>Q6P1Y0</accession>
<accession>Q6ZPG4</accession>
<accession>Q810C7</accession>
<accession>Q8BM46</accession>
<accession>Q8BXG7</accession>
<feature type="chain" id="PRO_0000250670" description="Cholesterol transporter ABCA5">
    <location>
        <begin position="1"/>
        <end position="1642"/>
    </location>
</feature>
<feature type="transmembrane region" description="Helical" evidence="2">
    <location>
        <begin position="32"/>
        <end position="52"/>
    </location>
</feature>
<feature type="transmembrane region" description="Helical" evidence="2">
    <location>
        <begin position="220"/>
        <end position="240"/>
    </location>
</feature>
<feature type="transmembrane region" description="Helical" evidence="2">
    <location>
        <begin position="264"/>
        <end position="284"/>
    </location>
</feature>
<feature type="transmembrane region" description="Helical" evidence="2">
    <location>
        <begin position="297"/>
        <end position="317"/>
    </location>
</feature>
<feature type="transmembrane region" description="Helical" evidence="2">
    <location>
        <begin position="328"/>
        <end position="348"/>
    </location>
</feature>
<feature type="transmembrane region" description="Helical" evidence="2">
    <location>
        <begin position="355"/>
        <end position="375"/>
    </location>
</feature>
<feature type="transmembrane region" description="Helical" evidence="2">
    <location>
        <begin position="396"/>
        <end position="416"/>
    </location>
</feature>
<feature type="transmembrane region" description="Helical" evidence="2">
    <location>
        <begin position="864"/>
        <end position="884"/>
    </location>
</feature>
<feature type="transmembrane region" description="Helical" evidence="2">
    <location>
        <begin position="967"/>
        <end position="987"/>
    </location>
</feature>
<feature type="transmembrane region" description="Helical" evidence="2">
    <location>
        <begin position="1021"/>
        <end position="1041"/>
    </location>
</feature>
<feature type="transmembrane region" description="Helical" evidence="2">
    <location>
        <begin position="1071"/>
        <end position="1091"/>
    </location>
</feature>
<feature type="transmembrane region" description="Helical" evidence="2">
    <location>
        <begin position="1102"/>
        <end position="1122"/>
    </location>
</feature>
<feature type="transmembrane region" description="Helical" evidence="2">
    <location>
        <begin position="1138"/>
        <end position="1158"/>
    </location>
</feature>
<feature type="transmembrane region" description="Helical" evidence="2">
    <location>
        <begin position="1164"/>
        <end position="1184"/>
    </location>
</feature>
<feature type="transmembrane region" description="Helical" evidence="2">
    <location>
        <begin position="1207"/>
        <end position="1227"/>
    </location>
</feature>
<feature type="domain" description="ABC transporter 1" evidence="3">
    <location>
        <begin position="478"/>
        <end position="713"/>
    </location>
</feature>
<feature type="domain" description="ABC transporter 2" evidence="3">
    <location>
        <begin position="1290"/>
        <end position="1533"/>
    </location>
</feature>
<feature type="binding site" evidence="3">
    <location>
        <begin position="514"/>
        <end position="521"/>
    </location>
    <ligand>
        <name>ATP</name>
        <dbReference type="ChEBI" id="CHEBI:30616"/>
        <label>1</label>
    </ligand>
</feature>
<feature type="binding site" evidence="3">
    <location>
        <begin position="1333"/>
        <end position="1340"/>
    </location>
    <ligand>
        <name>ATP</name>
        <dbReference type="ChEBI" id="CHEBI:30616"/>
        <label>2</label>
    </ligand>
</feature>
<feature type="glycosylation site" description="N-linked (GlcNAc...) asparagine" evidence="2">
    <location>
        <position position="86"/>
    </location>
</feature>
<feature type="glycosylation site" description="N-linked (GlcNAc...) asparagine" evidence="2">
    <location>
        <position position="388"/>
    </location>
</feature>
<feature type="glycosylation site" description="N-linked (GlcNAc...) asparagine" evidence="2">
    <location>
        <position position="458"/>
    </location>
</feature>
<feature type="glycosylation site" description="N-linked (GlcNAc...) asparagine" evidence="2">
    <location>
        <position position="919"/>
    </location>
</feature>
<feature type="glycosylation site" description="N-linked (GlcNAc...) asparagine" evidence="2">
    <location>
        <position position="996"/>
    </location>
</feature>
<feature type="sequence conflict" description="In Ref. 3; BAC32984." evidence="11" ref="3">
    <original>S</original>
    <variation>C</variation>
    <location>
        <position position="96"/>
    </location>
</feature>
<feature type="sequence conflict" description="In Ref. 3; BAE41431." evidence="11" ref="3">
    <original>K</original>
    <variation>E</variation>
    <location>
        <position position="113"/>
    </location>
</feature>
<feature type="sequence conflict" description="In Ref. 3; BAC32984." evidence="11" ref="3">
    <original>K</original>
    <variation>E</variation>
    <location>
        <position position="132"/>
    </location>
</feature>
<feature type="sequence conflict" description="In Ref. 1; AAM90895." evidence="11" ref="1">
    <original>K</original>
    <variation>E</variation>
    <location>
        <position position="188"/>
    </location>
</feature>
<feature type="sequence conflict" description="In Ref. 1; AAM90895." evidence="11" ref="1">
    <original>F</original>
    <variation>V</variation>
    <location>
        <position position="303"/>
    </location>
</feature>
<feature type="sequence conflict" description="In Ref. 3; BAC32984." evidence="11" ref="3">
    <original>A</original>
    <variation>P</variation>
    <location>
        <position position="384"/>
    </location>
</feature>
<feature type="sequence conflict" description="In Ref. 1; AAM90895." evidence="11" ref="1">
    <original>L</original>
    <variation>P</variation>
    <location>
        <position position="530"/>
    </location>
</feature>
<feature type="sequence conflict" description="In Ref. 1; AAM90895." evidence="11" ref="1">
    <original>M</original>
    <variation>I</variation>
    <location>
        <position position="551"/>
    </location>
</feature>
<feature type="sequence conflict" description="In Ref. 1; AAM90895." evidence="11" ref="1">
    <original>E</original>
    <variation>G</variation>
    <location>
        <position position="809"/>
    </location>
</feature>
<feature type="sequence conflict" description="In Ref. 1; AAM90895." evidence="11" ref="1">
    <original>L</original>
    <variation>P</variation>
    <location>
        <position position="839"/>
    </location>
</feature>
<feature type="sequence conflict" description="In Ref. 1; AAM90895." evidence="11" ref="1">
    <original>K</original>
    <variation>N</variation>
    <location>
        <position position="856"/>
    </location>
</feature>
<feature type="sequence conflict" description="In Ref. 1; AAM90895." evidence="11" ref="1">
    <original>F</original>
    <variation>V</variation>
    <location>
        <position position="880"/>
    </location>
</feature>
<feature type="sequence conflict" description="In Ref. 4; AAH64823." evidence="11" ref="4">
    <original>I</original>
    <variation>K</variation>
    <location>
        <position position="1231"/>
    </location>
</feature>
<feature type="sequence conflict" description="In Ref. 1; AAM90895." evidence="11" ref="1">
    <original>V</original>
    <variation>G</variation>
    <location>
        <position position="1503"/>
    </location>
</feature>
<comment type="function">
    <text evidence="5 7 9 10">Cholesterol efflux transporter in macrophages that is responsible for APOAI/high-density lipoproteins (HDL) formation at the plasma membrane under high cholesterol levels and participates in reverse cholesterol transport (PubMed:20382126, PubMed:25125465, PubMed:32687853). May play a role in the processing of autolysosomes (PubMed:15870284).</text>
</comment>
<comment type="catalytic activity">
    <reaction evidence="12 13">
        <text>cholesterol(in) + ATP + H2O = cholesterol(out) + ADP + phosphate + H(+)</text>
        <dbReference type="Rhea" id="RHEA:39051"/>
        <dbReference type="ChEBI" id="CHEBI:15377"/>
        <dbReference type="ChEBI" id="CHEBI:15378"/>
        <dbReference type="ChEBI" id="CHEBI:16113"/>
        <dbReference type="ChEBI" id="CHEBI:30616"/>
        <dbReference type="ChEBI" id="CHEBI:43474"/>
        <dbReference type="ChEBI" id="CHEBI:456216"/>
    </reaction>
    <physiologicalReaction direction="left-to-right" evidence="12 13">
        <dbReference type="Rhea" id="RHEA:39052"/>
    </physiologicalReaction>
</comment>
<comment type="subcellular location">
    <subcellularLocation>
        <location evidence="1">Golgi apparatus membrane</location>
        <topology evidence="1">Multi-pass membrane protein</topology>
    </subcellularLocation>
    <subcellularLocation>
        <location evidence="5">Lysosome membrane</location>
        <topology evidence="5">Multi-pass membrane protein</topology>
    </subcellularLocation>
    <subcellularLocation>
        <location evidence="5">Late endosome membrane</location>
        <topology evidence="5">Multi-pass membrane protein</topology>
    </subcellularLocation>
    <subcellularLocation>
        <location evidence="10">Cell membrane</location>
    </subcellularLocation>
    <text evidence="10">Localized at cell membrane under high cholesterol levels.</text>
</comment>
<comment type="tissue specificity">
    <text evidence="4 5 8 9">Expressed in cardiomyocytes, oligodendrocytes and astrocytes in brain, alveolar type 2 cells in lung and follicular cells in the thyroid gland (at protein level). Detected in brain, testis, lung, heart, liver, kidney, skeletal muscle and placenta. Strongly expressed in the basal cells of the seminiferous tubules, interstitial cells consisting of Leydig cells, as well as the tunica albuginea (PubMed:24831815). In the epididymis, specifically and very strongly expressed in the connective tissue outlining the cylindrical epithelium in the corpus and cauda regions, including fibrocytes and smooth muscle cells, as well as within the basal and tall columnar cells of the corpus cylindrical epithelium (PubMed:24831815). Highly expressed in the brain with high expression in cortical and hippocampal neurons and moderately in the lung (PubMed:25125465).</text>
</comment>
<comment type="developmental stage">
    <text evidence="4">Expressed during embryogenesis.</text>
</comment>
<comment type="induction">
    <text evidence="6 10">Down-regulated by digoxin (PubMed:16445568). Up-regulated by an excess cellular cholesterol level (PubMed:32687853). Up-regulated when ABCA1 is down-regulated (PubMed:32687853).</text>
</comment>
<comment type="PTM">
    <text evidence="5">N-glycosylated.</text>
</comment>
<comment type="disruption phenotype">
    <text evidence="5">Mice display hypothyroidism and lethal heart abnormalities that may be due to altered autolysosomes processing.</text>
</comment>
<comment type="similarity">
    <text evidence="11">Belongs to the ABC transporter superfamily. ABCA family.</text>
</comment>
<comment type="sequence caution" evidence="11">
    <conflict type="erroneous initiation">
        <sequence resource="EMBL-CDS" id="BAC28896"/>
    </conflict>
</comment>
<sequence>MATAIRDVGVWRQTRTLLLKNYLIKCRTKKSSVQEILFPLFFLFWLILVSMMHPNKKYEEVSDIELSPMDKFSLSNVILGYTPVTNITSSIMQRVSTDHLPKVIVTEEYANEKELVAASLSKSSNFVGVVFKDTMSYELRFFPEMIPVSSIYMNSREGCSKTCDAAQYWSLGFTVLQASIDAAIIQLKTNVSVWSELESTKAVIMGEAAVVEIDTFPRGVILIYLVIAFSPFGYFLAIHIVAEKEKKLKEFLKIMGLHDTAFWLSWVLLYASLIFLMSLLMAVIATASSLFPQSSSIVIFLLFFLYGLSSVFFALMLTPLFKKSKHVGVVEFFVTVVFGFVGLLIVLIESFPRSLVWLFSPLCQCAFLIGIAQVMHLEDFNEGALFSNLTEGPYPLIITIIMLALDSVFYVLLAVYLDQVIPGEFGLRRSSLYFLKPSYWSKNKRNYKELSEGNINGNISLNEIVEPVSSEFIGKEAIRISGIQKSYRKKTENVEALRNLSFDIYEGQITALLGHSGTGKSTLMNILCGLCPPSDGFASIYGHRVSEIDEMFEARKMIGICPQSDINFDVLTVEENLSILASIKGIPANNIIQEVQKVLLDLDMQAIKDNQAKKLSGGQKRKLSVGIAVLGNPKILLLDEPTAGMDPCSRHIVWNLLKYRKANRVTVFSTHFMDEADILADRKAVISQGMLKCVGSSIFLKSKWGIGYRLSMYIDRYCATESLSSLVRQHIPAAALLQQNDQQLVYSLPFKDMDKFSGLFSALDIHSNLGVISYGVSMTTLEDVFLKLEVEAEIDQADYSVFTQQPREEETDSKSFDEMEQSLLILSETKASSVSTMSLWKQQVSTIAKFHFLSLKRESKSVRAVLLLLLIFFAVQIFMFFLHHSFKNAVVPIKLVPDLYFLKPGDKPHKYKTSLLLQNSTDSDINGLIEFFAHQNIMVAMFNDSDYVSAAPHSAALNVVRSEKDYVFSAVFNSTMVYCLPVMMNIISNYYLYHLNVTEAIQTWSTPFIQEITDIVFKIELYFQAALLGIIVTAMPPYFAMENAENHKIKAYTQLKLSGLLPSAYWVGQAVVDIPLFFVVLILMLGSLFAFHHGLYFYPAKFLAVVFCLIAYVPSVILFTYIASFTFKKILNTKEFWSFIYSVTALACVAITETTFFLQYAVTAVFHYTFCIAIPIYPLLGCLISFIKGSWKNMPKNENTYNPWDRLLVAVIMPYLQCILWIFLLQHYEKIHGGRSIRKDPFFRALSQKAKNKKFPEPPINEDEDEDVKAERLKVKELMGCQCCEEKPAIMVCNLHKEYDDKKDFLHSRKTTKVATKYISFCVKKGEILGLLGPNGAGKSTVINTLVGDVEPTSGKIFLGDYGSHSSEDDESIKCMGYCPQTNPLWPDLTLQEHFEIYGAVKGMSPGDMKEVISRITKALDLKEHLQKTVKKLPAGIKRKLCFALSMLGNPQVTLLDEPSTGMDPRAKQHMWRAIRTAFKNKKRAALLTTHYMEEAEAVCDRVAIMVSGQLRCIGTVQHLKSKFGKGYFLEIKLKDWIENLEIDRLQREIQYIFPNASRQESFSSILAFKIPKEDVQSLSQSFAKLEEAKRTFAIEEYSFSQATLEQVFVELTKEQEEEDNSCGTLASTLWWERTQEDRVVF</sequence>
<dbReference type="EC" id="7.6.2.-" evidence="12 13"/>
<dbReference type="EMBL" id="AF491842">
    <property type="protein sequence ID" value="AAM90895.1"/>
    <property type="molecule type" value="mRNA"/>
</dbReference>
<dbReference type="EMBL" id="AB097675">
    <property type="protein sequence ID" value="BAC66658.1"/>
    <property type="molecule type" value="mRNA"/>
</dbReference>
<dbReference type="EMBL" id="AK034961">
    <property type="protein sequence ID" value="BAC28896.2"/>
    <property type="status" value="ALT_INIT"/>
    <property type="molecule type" value="mRNA"/>
</dbReference>
<dbReference type="EMBL" id="AK047188">
    <property type="protein sequence ID" value="BAC32984.1"/>
    <property type="molecule type" value="mRNA"/>
</dbReference>
<dbReference type="EMBL" id="AK138604">
    <property type="protein sequence ID" value="BAE23713.1"/>
    <property type="molecule type" value="mRNA"/>
</dbReference>
<dbReference type="EMBL" id="AK169879">
    <property type="protein sequence ID" value="BAE41431.1"/>
    <property type="molecule type" value="mRNA"/>
</dbReference>
<dbReference type="EMBL" id="BC064823">
    <property type="protein sequence ID" value="AAH64823.1"/>
    <property type="status" value="ALT_SEQ"/>
    <property type="molecule type" value="mRNA"/>
</dbReference>
<dbReference type="EMBL" id="AK129463">
    <property type="protein sequence ID" value="BAC98273.1"/>
    <property type="molecule type" value="mRNA"/>
</dbReference>
<dbReference type="CCDS" id="CCDS25591.1"/>
<dbReference type="RefSeq" id="NP_671752.2">
    <property type="nucleotide sequence ID" value="NM_147219.2"/>
</dbReference>
<dbReference type="RefSeq" id="XP_006533128.1">
    <property type="nucleotide sequence ID" value="XM_006533065.5"/>
</dbReference>
<dbReference type="SMR" id="Q8K448"/>
<dbReference type="BioGRID" id="229877">
    <property type="interactions" value="4"/>
</dbReference>
<dbReference type="FunCoup" id="Q8K448">
    <property type="interactions" value="884"/>
</dbReference>
<dbReference type="STRING" id="10090.ENSMUSP00000047927"/>
<dbReference type="GlyCosmos" id="Q8K448">
    <property type="glycosylation" value="5 sites, No reported glycans"/>
</dbReference>
<dbReference type="GlyGen" id="Q8K448">
    <property type="glycosylation" value="7 sites, 1 N-linked glycan (1 site)"/>
</dbReference>
<dbReference type="iPTMnet" id="Q8K448"/>
<dbReference type="PhosphoSitePlus" id="Q8K448"/>
<dbReference type="SwissPalm" id="Q8K448"/>
<dbReference type="PaxDb" id="10090-ENSMUSP00000047927"/>
<dbReference type="PeptideAtlas" id="Q8K448"/>
<dbReference type="ProteomicsDB" id="285952"/>
<dbReference type="Pumba" id="Q8K448"/>
<dbReference type="Antibodypedia" id="19335">
    <property type="antibodies" value="174 antibodies from 28 providers"/>
</dbReference>
<dbReference type="DNASU" id="217265"/>
<dbReference type="Ensembl" id="ENSMUST00000043961.12">
    <property type="protein sequence ID" value="ENSMUSP00000047927.6"/>
    <property type="gene ID" value="ENSMUSG00000018800.15"/>
</dbReference>
<dbReference type="GeneID" id="217265"/>
<dbReference type="KEGG" id="mmu:217265"/>
<dbReference type="UCSC" id="uc007mdm.1">
    <property type="organism name" value="mouse"/>
</dbReference>
<dbReference type="AGR" id="MGI:2386607"/>
<dbReference type="CTD" id="23461"/>
<dbReference type="MGI" id="MGI:2386607">
    <property type="gene designation" value="Abca5"/>
</dbReference>
<dbReference type="VEuPathDB" id="HostDB:ENSMUSG00000018800"/>
<dbReference type="eggNOG" id="KOG0059">
    <property type="taxonomic scope" value="Eukaryota"/>
</dbReference>
<dbReference type="GeneTree" id="ENSGT00940000158172"/>
<dbReference type="HOGENOM" id="CLU_000604_19_1_1"/>
<dbReference type="InParanoid" id="Q8K448"/>
<dbReference type="OMA" id="MNPLWPD"/>
<dbReference type="OrthoDB" id="8061355at2759"/>
<dbReference type="PhylomeDB" id="Q8K448"/>
<dbReference type="TreeFam" id="TF105192"/>
<dbReference type="Reactome" id="R-MMU-1369062">
    <property type="pathway name" value="ABC transporters in lipid homeostasis"/>
</dbReference>
<dbReference type="BioGRID-ORCS" id="217265">
    <property type="hits" value="3 hits in 77 CRISPR screens"/>
</dbReference>
<dbReference type="ChiTaRS" id="Abca5">
    <property type="organism name" value="mouse"/>
</dbReference>
<dbReference type="PRO" id="PR:Q8K448"/>
<dbReference type="Proteomes" id="UP000000589">
    <property type="component" value="Chromosome 11"/>
</dbReference>
<dbReference type="RNAct" id="Q8K448">
    <property type="molecule type" value="protein"/>
</dbReference>
<dbReference type="Bgee" id="ENSMUSG00000018800">
    <property type="expression patterns" value="Expressed in otolith organ and 187 other cell types or tissues"/>
</dbReference>
<dbReference type="ExpressionAtlas" id="Q8K448">
    <property type="expression patterns" value="baseline and differential"/>
</dbReference>
<dbReference type="GO" id="GO:0000139">
    <property type="term" value="C:Golgi membrane"/>
    <property type="evidence" value="ECO:0007669"/>
    <property type="project" value="UniProtKB-SubCell"/>
</dbReference>
<dbReference type="GO" id="GO:0005770">
    <property type="term" value="C:late endosome"/>
    <property type="evidence" value="ECO:0000314"/>
    <property type="project" value="BHF-UCL"/>
</dbReference>
<dbReference type="GO" id="GO:0031902">
    <property type="term" value="C:late endosome membrane"/>
    <property type="evidence" value="ECO:0007669"/>
    <property type="project" value="UniProtKB-SubCell"/>
</dbReference>
<dbReference type="GO" id="GO:0005765">
    <property type="term" value="C:lysosomal membrane"/>
    <property type="evidence" value="ECO:0007669"/>
    <property type="project" value="UniProtKB-SubCell"/>
</dbReference>
<dbReference type="GO" id="GO:0005764">
    <property type="term" value="C:lysosome"/>
    <property type="evidence" value="ECO:0000314"/>
    <property type="project" value="BHF-UCL"/>
</dbReference>
<dbReference type="GO" id="GO:0005886">
    <property type="term" value="C:plasma membrane"/>
    <property type="evidence" value="ECO:0007669"/>
    <property type="project" value="UniProtKB-SubCell"/>
</dbReference>
<dbReference type="GO" id="GO:0140359">
    <property type="term" value="F:ABC-type transporter activity"/>
    <property type="evidence" value="ECO:0007669"/>
    <property type="project" value="InterPro"/>
</dbReference>
<dbReference type="GO" id="GO:0005524">
    <property type="term" value="F:ATP binding"/>
    <property type="evidence" value="ECO:0007669"/>
    <property type="project" value="UniProtKB-KW"/>
</dbReference>
<dbReference type="GO" id="GO:0016887">
    <property type="term" value="F:ATP hydrolysis activity"/>
    <property type="evidence" value="ECO:0007669"/>
    <property type="project" value="InterPro"/>
</dbReference>
<dbReference type="GO" id="GO:0033344">
    <property type="term" value="P:cholesterol efflux"/>
    <property type="evidence" value="ECO:0000315"/>
    <property type="project" value="BHF-UCL"/>
</dbReference>
<dbReference type="GO" id="GO:0042632">
    <property type="term" value="P:cholesterol homeostasis"/>
    <property type="evidence" value="ECO:0000250"/>
    <property type="project" value="UniProtKB"/>
</dbReference>
<dbReference type="GO" id="GO:0008203">
    <property type="term" value="P:cholesterol metabolic process"/>
    <property type="evidence" value="ECO:0000250"/>
    <property type="project" value="UniProtKB"/>
</dbReference>
<dbReference type="GO" id="GO:0034375">
    <property type="term" value="P:high-density lipoprotein particle remodeling"/>
    <property type="evidence" value="ECO:0000315"/>
    <property type="project" value="BHF-UCL"/>
</dbReference>
<dbReference type="GO" id="GO:0010745">
    <property type="term" value="P:negative regulation of macrophage derived foam cell differentiation"/>
    <property type="evidence" value="ECO:0000315"/>
    <property type="project" value="BHF-UCL"/>
</dbReference>
<dbReference type="GO" id="GO:1903064">
    <property type="term" value="P:positive regulation of reverse cholesterol transport"/>
    <property type="evidence" value="ECO:0000315"/>
    <property type="project" value="UniProtKB"/>
</dbReference>
<dbReference type="GO" id="GO:0010874">
    <property type="term" value="P:regulation of cholesterol efflux"/>
    <property type="evidence" value="ECO:0000315"/>
    <property type="project" value="UniProtKB"/>
</dbReference>
<dbReference type="GO" id="GO:0043691">
    <property type="term" value="P:reverse cholesterol transport"/>
    <property type="evidence" value="ECO:0000305"/>
    <property type="project" value="BHF-UCL"/>
</dbReference>
<dbReference type="CDD" id="cd03263">
    <property type="entry name" value="ABC_subfamily_A"/>
    <property type="match status" value="2"/>
</dbReference>
<dbReference type="FunFam" id="3.40.50.300:FF:000335">
    <property type="entry name" value="ATP binding cassette subfamily A member 5"/>
    <property type="match status" value="1"/>
</dbReference>
<dbReference type="FunFam" id="3.40.50.300:FF:000729">
    <property type="entry name" value="ATP-binding cassette, sub-family A (ABC1), member 5"/>
    <property type="match status" value="1"/>
</dbReference>
<dbReference type="Gene3D" id="3.40.50.300">
    <property type="entry name" value="P-loop containing nucleotide triphosphate hydrolases"/>
    <property type="match status" value="2"/>
</dbReference>
<dbReference type="InterPro" id="IPR003593">
    <property type="entry name" value="AAA+_ATPase"/>
</dbReference>
<dbReference type="InterPro" id="IPR013525">
    <property type="entry name" value="ABC2_TM"/>
</dbReference>
<dbReference type="InterPro" id="IPR003439">
    <property type="entry name" value="ABC_transporter-like_ATP-bd"/>
</dbReference>
<dbReference type="InterPro" id="IPR017871">
    <property type="entry name" value="ABC_transporter-like_CS"/>
</dbReference>
<dbReference type="InterPro" id="IPR026082">
    <property type="entry name" value="ABCA"/>
</dbReference>
<dbReference type="InterPro" id="IPR027417">
    <property type="entry name" value="P-loop_NTPase"/>
</dbReference>
<dbReference type="InterPro" id="IPR056264">
    <property type="entry name" value="R2_ABCA1-4-like"/>
</dbReference>
<dbReference type="PANTHER" id="PTHR19229">
    <property type="entry name" value="ATP-BINDING CASSETTE TRANSPORTER SUBFAMILY A ABCA"/>
    <property type="match status" value="1"/>
</dbReference>
<dbReference type="PANTHER" id="PTHR19229:SF100">
    <property type="entry name" value="CHOLESTEROL TRANSPORTER ABCA5"/>
    <property type="match status" value="1"/>
</dbReference>
<dbReference type="Pfam" id="PF12698">
    <property type="entry name" value="ABC2_membrane_3"/>
    <property type="match status" value="1"/>
</dbReference>
<dbReference type="Pfam" id="PF00005">
    <property type="entry name" value="ABC_tran"/>
    <property type="match status" value="2"/>
</dbReference>
<dbReference type="Pfam" id="PF23321">
    <property type="entry name" value="R1_ABCA1"/>
    <property type="match status" value="1"/>
</dbReference>
<dbReference type="SMART" id="SM00382">
    <property type="entry name" value="AAA"/>
    <property type="match status" value="2"/>
</dbReference>
<dbReference type="SUPFAM" id="SSF52540">
    <property type="entry name" value="P-loop containing nucleoside triphosphate hydrolases"/>
    <property type="match status" value="2"/>
</dbReference>
<dbReference type="PROSITE" id="PS00211">
    <property type="entry name" value="ABC_TRANSPORTER_1"/>
    <property type="match status" value="1"/>
</dbReference>
<dbReference type="PROSITE" id="PS50893">
    <property type="entry name" value="ABC_TRANSPORTER_2"/>
    <property type="match status" value="2"/>
</dbReference>
<reference key="1">
    <citation type="journal article" date="2003" name="Mamm. Genome">
        <title>Evolutionary analysis of a cluster of ATP-binding cassette (ABC) genes.</title>
        <authorList>
            <person name="Annilo T."/>
            <person name="Chen Z.-Q."/>
            <person name="Shulenin S."/>
            <person name="Dean M."/>
        </authorList>
    </citation>
    <scope>NUCLEOTIDE SEQUENCE [MRNA]</scope>
    <scope>TISSUE SPECIFICITY</scope>
    <scope>DEVELOPMENTAL STAGE</scope>
    <source>
        <strain>BALB/cJ</strain>
        <tissue>Liver</tissue>
    </source>
</reference>
<reference key="2">
    <citation type="journal article" date="2005" name="Mol. Cell. Biol.">
        <title>ABCA5 resides in lysosomes, and ABCA5 knockout mice develop lysosomal disease-like symptoms.</title>
        <authorList>
            <person name="Kubo Y."/>
            <person name="Sekiya S."/>
            <person name="Ohigashi M."/>
            <person name="Takenaka C."/>
            <person name="Tamura K."/>
            <person name="Nada S."/>
            <person name="Nishi T."/>
            <person name="Yamamoto A."/>
            <person name="Yamaguchi A."/>
        </authorList>
    </citation>
    <scope>NUCLEOTIDE SEQUENCE [MRNA]</scope>
    <scope>FUNCTION</scope>
    <scope>GLYCOSYLATION</scope>
    <scope>SUBCELLULAR LOCATION</scope>
    <scope>TISSUE SPECIFICITY</scope>
    <scope>DISRUPTION PHENOTYPE</scope>
    <source>
        <tissue>Brain</tissue>
    </source>
</reference>
<reference key="3">
    <citation type="journal article" date="2005" name="Science">
        <title>The transcriptional landscape of the mammalian genome.</title>
        <authorList>
            <person name="Carninci P."/>
            <person name="Kasukawa T."/>
            <person name="Katayama S."/>
            <person name="Gough J."/>
            <person name="Frith M.C."/>
            <person name="Maeda N."/>
            <person name="Oyama R."/>
            <person name="Ravasi T."/>
            <person name="Lenhard B."/>
            <person name="Wells C."/>
            <person name="Kodzius R."/>
            <person name="Shimokawa K."/>
            <person name="Bajic V.B."/>
            <person name="Brenner S.E."/>
            <person name="Batalov S."/>
            <person name="Forrest A.R."/>
            <person name="Zavolan M."/>
            <person name="Davis M.J."/>
            <person name="Wilming L.G."/>
            <person name="Aidinis V."/>
            <person name="Allen J.E."/>
            <person name="Ambesi-Impiombato A."/>
            <person name="Apweiler R."/>
            <person name="Aturaliya R.N."/>
            <person name="Bailey T.L."/>
            <person name="Bansal M."/>
            <person name="Baxter L."/>
            <person name="Beisel K.W."/>
            <person name="Bersano T."/>
            <person name="Bono H."/>
            <person name="Chalk A.M."/>
            <person name="Chiu K.P."/>
            <person name="Choudhary V."/>
            <person name="Christoffels A."/>
            <person name="Clutterbuck D.R."/>
            <person name="Crowe M.L."/>
            <person name="Dalla E."/>
            <person name="Dalrymple B.P."/>
            <person name="de Bono B."/>
            <person name="Della Gatta G."/>
            <person name="di Bernardo D."/>
            <person name="Down T."/>
            <person name="Engstrom P."/>
            <person name="Fagiolini M."/>
            <person name="Faulkner G."/>
            <person name="Fletcher C.F."/>
            <person name="Fukushima T."/>
            <person name="Furuno M."/>
            <person name="Futaki S."/>
            <person name="Gariboldi M."/>
            <person name="Georgii-Hemming P."/>
            <person name="Gingeras T.R."/>
            <person name="Gojobori T."/>
            <person name="Green R.E."/>
            <person name="Gustincich S."/>
            <person name="Harbers M."/>
            <person name="Hayashi Y."/>
            <person name="Hensch T.K."/>
            <person name="Hirokawa N."/>
            <person name="Hill D."/>
            <person name="Huminiecki L."/>
            <person name="Iacono M."/>
            <person name="Ikeo K."/>
            <person name="Iwama A."/>
            <person name="Ishikawa T."/>
            <person name="Jakt M."/>
            <person name="Kanapin A."/>
            <person name="Katoh M."/>
            <person name="Kawasawa Y."/>
            <person name="Kelso J."/>
            <person name="Kitamura H."/>
            <person name="Kitano H."/>
            <person name="Kollias G."/>
            <person name="Krishnan S.P."/>
            <person name="Kruger A."/>
            <person name="Kummerfeld S.K."/>
            <person name="Kurochkin I.V."/>
            <person name="Lareau L.F."/>
            <person name="Lazarevic D."/>
            <person name="Lipovich L."/>
            <person name="Liu J."/>
            <person name="Liuni S."/>
            <person name="McWilliam S."/>
            <person name="Madan Babu M."/>
            <person name="Madera M."/>
            <person name="Marchionni L."/>
            <person name="Matsuda H."/>
            <person name="Matsuzawa S."/>
            <person name="Miki H."/>
            <person name="Mignone F."/>
            <person name="Miyake S."/>
            <person name="Morris K."/>
            <person name="Mottagui-Tabar S."/>
            <person name="Mulder N."/>
            <person name="Nakano N."/>
            <person name="Nakauchi H."/>
            <person name="Ng P."/>
            <person name="Nilsson R."/>
            <person name="Nishiguchi S."/>
            <person name="Nishikawa S."/>
            <person name="Nori F."/>
            <person name="Ohara O."/>
            <person name="Okazaki Y."/>
            <person name="Orlando V."/>
            <person name="Pang K.C."/>
            <person name="Pavan W.J."/>
            <person name="Pavesi G."/>
            <person name="Pesole G."/>
            <person name="Petrovsky N."/>
            <person name="Piazza S."/>
            <person name="Reed J."/>
            <person name="Reid J.F."/>
            <person name="Ring B.Z."/>
            <person name="Ringwald M."/>
            <person name="Rost B."/>
            <person name="Ruan Y."/>
            <person name="Salzberg S.L."/>
            <person name="Sandelin A."/>
            <person name="Schneider C."/>
            <person name="Schoenbach C."/>
            <person name="Sekiguchi K."/>
            <person name="Semple C.A."/>
            <person name="Seno S."/>
            <person name="Sessa L."/>
            <person name="Sheng Y."/>
            <person name="Shibata Y."/>
            <person name="Shimada H."/>
            <person name="Shimada K."/>
            <person name="Silva D."/>
            <person name="Sinclair B."/>
            <person name="Sperling S."/>
            <person name="Stupka E."/>
            <person name="Sugiura K."/>
            <person name="Sultana R."/>
            <person name="Takenaka Y."/>
            <person name="Taki K."/>
            <person name="Tammoja K."/>
            <person name="Tan S.L."/>
            <person name="Tang S."/>
            <person name="Taylor M.S."/>
            <person name="Tegner J."/>
            <person name="Teichmann S.A."/>
            <person name="Ueda H.R."/>
            <person name="van Nimwegen E."/>
            <person name="Verardo R."/>
            <person name="Wei C.L."/>
            <person name="Yagi K."/>
            <person name="Yamanishi H."/>
            <person name="Zabarovsky E."/>
            <person name="Zhu S."/>
            <person name="Zimmer A."/>
            <person name="Hide W."/>
            <person name="Bult C."/>
            <person name="Grimmond S.M."/>
            <person name="Teasdale R.D."/>
            <person name="Liu E.T."/>
            <person name="Brusic V."/>
            <person name="Quackenbush J."/>
            <person name="Wahlestedt C."/>
            <person name="Mattick J.S."/>
            <person name="Hume D.A."/>
            <person name="Kai C."/>
            <person name="Sasaki D."/>
            <person name="Tomaru Y."/>
            <person name="Fukuda S."/>
            <person name="Kanamori-Katayama M."/>
            <person name="Suzuki M."/>
            <person name="Aoki J."/>
            <person name="Arakawa T."/>
            <person name="Iida J."/>
            <person name="Imamura K."/>
            <person name="Itoh M."/>
            <person name="Kato T."/>
            <person name="Kawaji H."/>
            <person name="Kawagashira N."/>
            <person name="Kawashima T."/>
            <person name="Kojima M."/>
            <person name="Kondo S."/>
            <person name="Konno H."/>
            <person name="Nakano K."/>
            <person name="Ninomiya N."/>
            <person name="Nishio T."/>
            <person name="Okada M."/>
            <person name="Plessy C."/>
            <person name="Shibata K."/>
            <person name="Shiraki T."/>
            <person name="Suzuki S."/>
            <person name="Tagami M."/>
            <person name="Waki K."/>
            <person name="Watahiki A."/>
            <person name="Okamura-Oho Y."/>
            <person name="Suzuki H."/>
            <person name="Kawai J."/>
            <person name="Hayashizaki Y."/>
        </authorList>
    </citation>
    <scope>NUCLEOTIDE SEQUENCE [LARGE SCALE MRNA] OF 1-1589</scope>
    <source>
        <strain>C57BL/6J</strain>
        <tissue>Cerebellum</tissue>
        <tissue>Dendritic cell</tissue>
        <tissue>Embryo</tissue>
        <tissue>Spinal cord</tissue>
    </source>
</reference>
<reference key="4">
    <citation type="journal article" date="2004" name="Genome Res.">
        <title>The status, quality, and expansion of the NIH full-length cDNA project: the Mammalian Gene Collection (MGC).</title>
        <authorList>
            <consortium name="The MGC Project Team"/>
        </authorList>
    </citation>
    <scope>NUCLEOTIDE SEQUENCE [LARGE SCALE MRNA] OF 1-1480</scope>
    <source>
        <strain>FVB/N</strain>
        <tissue>Mammary tumor</tissue>
    </source>
</reference>
<reference key="5">
    <citation type="journal article" date="2003" name="DNA Res.">
        <title>Prediction of the coding sequences of mouse homologues of KIAA gene: III. The complete nucleotide sequences of 500 mouse KIAA-homologous cDNAs identified by screening of terminal sequences of cDNA clones randomly sampled from size-fractionated libraries.</title>
        <authorList>
            <person name="Okazaki N."/>
            <person name="Kikuno R."/>
            <person name="Ohara R."/>
            <person name="Inamoto S."/>
            <person name="Koseki H."/>
            <person name="Hiraoka S."/>
            <person name="Saga Y."/>
            <person name="Nagase T."/>
            <person name="Ohara O."/>
            <person name="Koga H."/>
        </authorList>
    </citation>
    <scope>NUCLEOTIDE SEQUENCE [LARGE SCALE MRNA] OF 1034-1642</scope>
    <source>
        <tissue>Brain</tissue>
    </source>
</reference>
<reference key="6">
    <citation type="journal article" date="2005" name="Clin. Exp. Pharmacol. Physiol.">
        <title>Acute digoxin loading reduces ABCA8A mRNA expression in the mouse liver.</title>
        <authorList>
            <person name="Wakaumi M."/>
            <person name="Ishibashi K."/>
            <person name="Ando H."/>
            <person name="Kasanuki H."/>
            <person name="Tsuruoka S."/>
        </authorList>
    </citation>
    <scope>INDUCTION</scope>
</reference>
<reference key="7">
    <citation type="journal article" date="2010" name="Cell">
        <title>A tissue-specific atlas of mouse protein phosphorylation and expression.</title>
        <authorList>
            <person name="Huttlin E.L."/>
            <person name="Jedrychowski M.P."/>
            <person name="Elias J.E."/>
            <person name="Goswami T."/>
            <person name="Rad R."/>
            <person name="Beausoleil S.A."/>
            <person name="Villen J."/>
            <person name="Haas W."/>
            <person name="Sowa M.E."/>
            <person name="Gygi S.P."/>
        </authorList>
    </citation>
    <scope>IDENTIFICATION BY MASS SPECTROMETRY [LARGE SCALE ANALYSIS]</scope>
    <source>
        <tissue>Brain</tissue>
        <tissue>Lung</tissue>
        <tissue>Testis</tissue>
    </source>
</reference>
<reference key="8">
    <citation type="journal article" date="2010" name="Biochem. Biophys. Res. Commun.">
        <title>Macrophage ABCA5 deficiency influences cellular cholesterol efflux and increases susceptibility to atherosclerosis in female LDLr knockout mice.</title>
        <authorList>
            <person name="Ye D."/>
            <person name="Meurs I."/>
            <person name="Ohigashi M."/>
            <person name="Calpe-Berdiel L."/>
            <person name="Habets K.L."/>
            <person name="Zhao Y."/>
            <person name="Kubo Y."/>
            <person name="Yamaguchi A."/>
            <person name="Van Berkel T.J."/>
            <person name="Nishi T."/>
            <person name="Van Eck M."/>
        </authorList>
    </citation>
    <scope>FUNCTION</scope>
</reference>
<reference key="9">
    <citation type="journal article" date="2014" name="PLoS Genet.">
        <title>Mutations in the cholesterol transporter gene ABCA5 are associated with excessive hair overgrowth.</title>
        <authorList>
            <person name="DeStefano G.M."/>
            <person name="Kurban M."/>
            <person name="Anyane-Yeboa K."/>
            <person name="Dall'Armi C."/>
            <person name="Di Paolo G."/>
            <person name="Feenstra H."/>
            <person name="Silverberg N."/>
            <person name="Rohena L."/>
            <person name="Lopez-Cepeda L.D."/>
            <person name="Jobanputra V."/>
            <person name="Fantauzzo K.A."/>
            <person name="Kiuru M."/>
            <person name="Tadin-Strapps M."/>
            <person name="Sobrino A."/>
            <person name="Vitebsky A."/>
            <person name="Warburton D."/>
            <person name="Levy B."/>
            <person name="Salas-Alanis J.C."/>
            <person name="Christiano A.M."/>
        </authorList>
    </citation>
    <scope>TISSUE SPECIFICITY</scope>
</reference>
<reference key="10">
    <citation type="journal article" date="2015" name="J. Alzheimers Dis.">
        <title>ABCA5 regulates amyloid-beta peptide production and is associated with Alzheimer's disease neuropathology.</title>
        <authorList>
            <person name="Fu Y."/>
            <person name="Hsiao J.H."/>
            <person name="Paxinos G."/>
            <person name="Halliday G.M."/>
            <person name="Kim W.S."/>
        </authorList>
    </citation>
    <scope>TISSUE SPECIFICITY</scope>
    <scope>FUNCTION</scope>
</reference>
<reference key="11">
    <citation type="journal article" date="2020" name="J. Mol. Biol.">
        <title>Novel Mechanism of Cholesterol Transport by ABCA5 in Macrophages and Its Role in Dyslipidemia.</title>
        <authorList>
            <person name="Ray A.G."/>
            <person name="Choudhury K.R."/>
            <person name="Chakraborty S."/>
            <person name="Chakravarty D."/>
            <person name="Chander V."/>
            <person name="Jana B."/>
            <person name="Siddiqui K.N."/>
            <person name="Bandyopadhyay A."/>
        </authorList>
    </citation>
    <scope>INDUCTION</scope>
    <scope>FUNCTION</scope>
    <scope>CATALYTIC ACTIVITY</scope>
    <scope>SUBCELLULAR LOCATION</scope>
</reference>
<name>ABCA5_MOUSE</name>
<protein>
    <recommendedName>
        <fullName evidence="11">Cholesterol transporter ABCA5</fullName>
        <ecNumber evidence="12 13">7.6.2.-</ecNumber>
    </recommendedName>
    <alternativeName>
        <fullName evidence="11">ATP-binding cassette sub-family A member 5</fullName>
    </alternativeName>
</protein>
<gene>
    <name evidence="14" type="primary">Abca5</name>
    <name type="synonym">Kiaa1888</name>
</gene>